<dbReference type="EMBL" id="U02710">
    <property type="protein sequence ID" value="AAB67727.1"/>
    <property type="molecule type" value="Genomic_DNA"/>
</dbReference>
<dbReference type="EMBL" id="D85848">
    <property type="protein sequence ID" value="BAA21520.1"/>
    <property type="molecule type" value="mRNA"/>
</dbReference>
<dbReference type="SMR" id="O18425"/>
<dbReference type="TCDB" id="1.C.43.1.2">
    <property type="family name" value="the earthworm lysenin toxin (lysenin) family"/>
</dbReference>
<dbReference type="GO" id="GO:0005576">
    <property type="term" value="C:extracellular region"/>
    <property type="evidence" value="ECO:0007669"/>
    <property type="project" value="UniProtKB-SubCell"/>
</dbReference>
<dbReference type="GO" id="GO:0016020">
    <property type="term" value="C:membrane"/>
    <property type="evidence" value="ECO:0007669"/>
    <property type="project" value="UniProtKB-KW"/>
</dbReference>
<dbReference type="GO" id="GO:0044218">
    <property type="term" value="C:other organism cell membrane"/>
    <property type="evidence" value="ECO:0007669"/>
    <property type="project" value="UniProtKB-KW"/>
</dbReference>
<dbReference type="GO" id="GO:0090729">
    <property type="term" value="F:toxin activity"/>
    <property type="evidence" value="ECO:0007669"/>
    <property type="project" value="UniProtKB-KW"/>
</dbReference>
<dbReference type="GO" id="GO:0042742">
    <property type="term" value="P:defense response to bacterium"/>
    <property type="evidence" value="ECO:0007669"/>
    <property type="project" value="UniProtKB-KW"/>
</dbReference>
<dbReference type="GO" id="GO:0031640">
    <property type="term" value="P:killing of cells of another organism"/>
    <property type="evidence" value="ECO:0007669"/>
    <property type="project" value="UniProtKB-KW"/>
</dbReference>
<dbReference type="GO" id="GO:0006811">
    <property type="term" value="P:monoatomic ion transport"/>
    <property type="evidence" value="ECO:0007669"/>
    <property type="project" value="UniProtKB-KW"/>
</dbReference>
<dbReference type="CDD" id="cd20225">
    <property type="entry name" value="PFM_lysenin-like"/>
    <property type="match status" value="1"/>
</dbReference>
<dbReference type="Gene3D" id="2.60.120.980">
    <property type="match status" value="1"/>
</dbReference>
<dbReference type="Gene3D" id="2.80.10.50">
    <property type="match status" value="1"/>
</dbReference>
<keyword id="KW-0044">Antibiotic</keyword>
<keyword id="KW-0929">Antimicrobial</keyword>
<keyword id="KW-0204">Cytolysis</keyword>
<keyword id="KW-1015">Disulfide bond</keyword>
<keyword id="KW-0354">Hemolysis</keyword>
<keyword id="KW-0406">Ion transport</keyword>
<keyword id="KW-0472">Membrane</keyword>
<keyword id="KW-0964">Secreted</keyword>
<keyword id="KW-1052">Target cell membrane</keyword>
<keyword id="KW-1053">Target membrane</keyword>
<keyword id="KW-0800">Toxin</keyword>
<keyword id="KW-0812">Transmembrane</keyword>
<keyword id="KW-0813">Transport</keyword>
<proteinExistence type="evidence at transcript level"/>
<organism>
    <name type="scientific">Eisenia fetida</name>
    <name type="common">Red wiggler worm</name>
    <dbReference type="NCBI Taxonomy" id="6396"/>
    <lineage>
        <taxon>Eukaryota</taxon>
        <taxon>Metazoa</taxon>
        <taxon>Spiralia</taxon>
        <taxon>Lophotrochozoa</taxon>
        <taxon>Annelida</taxon>
        <taxon>Clitellata</taxon>
        <taxon>Oligochaeta</taxon>
        <taxon>Crassiclitellata</taxon>
        <taxon>Lumbricina</taxon>
        <taxon>Lumbricidae</taxon>
        <taxon>Lumbricinae</taxon>
        <taxon>Eisenia</taxon>
    </lineage>
</organism>
<feature type="chain" id="PRO_0000342608" description="Lysenin-related protein 2">
    <location>
        <begin position="1"/>
        <end position="300"/>
    </location>
</feature>
<feature type="region of interest" description="N-terminal cap domain" evidence="2">
    <location>
        <begin position="12"/>
        <end position="35"/>
    </location>
</feature>
<feature type="region of interest" description="Beta-hairpin domain" evidence="2">
    <location>
        <begin position="36"/>
        <end position="109"/>
    </location>
</feature>
<feature type="region of interest" description="N-terminal cap domain" evidence="2">
    <location>
        <begin position="110"/>
        <end position="158"/>
    </location>
</feature>
<feature type="region of interest" description="C-terminal receptor-binding domain" evidence="2">
    <location>
        <begin position="159"/>
        <end position="299"/>
    </location>
</feature>
<feature type="binding site" evidence="2">
    <location>
        <position position="187"/>
    </location>
    <ligand>
        <name>an N-(acyl)-sphingosylphosphocholine</name>
        <dbReference type="ChEBI" id="CHEBI:64583"/>
    </ligand>
</feature>
<feature type="binding site" evidence="2">
    <location>
        <position position="229"/>
    </location>
    <ligand>
        <name>an N-(acyl)-sphingosylphosphocholine</name>
        <dbReference type="ChEBI" id="CHEBI:64583"/>
    </ligand>
</feature>
<feature type="binding site" evidence="2">
    <location>
        <position position="235"/>
    </location>
    <ligand>
        <name>an N-(acyl)-sphingosylphosphocholine</name>
        <dbReference type="ChEBI" id="CHEBI:64583"/>
    </ligand>
</feature>
<feature type="binding site" evidence="2">
    <location>
        <position position="284"/>
    </location>
    <ligand>
        <name>an N-(acyl)-sphingosylphosphocholine</name>
        <dbReference type="ChEBI" id="CHEBI:64583"/>
    </ligand>
</feature>
<feature type="site" description="Crucial for binding sphingomyelin and inducing hemolysis" evidence="1">
    <location>
        <position position="22"/>
    </location>
</feature>
<feature type="site" description="Crucial for binding sphingomyelin and important for inducing hemolysis" evidence="1">
    <location>
        <position position="189"/>
    </location>
</feature>
<feature type="site" description="Important for activity" evidence="1">
    <location>
        <position position="211"/>
    </location>
</feature>
<feature type="site" description="Crucial for binding sphingomyelin and inducing hemolysis" evidence="1">
    <location>
        <position position="247"/>
    </location>
</feature>
<feature type="site" description="Crucial for binding sphingomyelin and inducing hemolysis" evidence="1">
    <location>
        <position position="293"/>
    </location>
</feature>
<feature type="disulfide bond" evidence="3">
    <location>
        <begin position="274"/>
        <end position="285"/>
    </location>
</feature>
<evidence type="ECO:0000250" key="1"/>
<evidence type="ECO:0000250" key="2">
    <source>
        <dbReference type="UniProtKB" id="O18423"/>
    </source>
</evidence>
<evidence type="ECO:0000255" key="3"/>
<evidence type="ECO:0000269" key="4">
    <source>
    </source>
</evidence>
<evidence type="ECO:0000269" key="5">
    <source>
    </source>
</evidence>
<evidence type="ECO:0000305" key="6"/>
<accession>O18425</accession>
<accession>Q39712</accession>
<reference key="1">
    <citation type="journal article" date="1997" name="Eur. J. Biochem.">
        <title>Sequence and expression of an Eisenia-fetida-derived cDNA clone that encodes the 40-kDa fetidin antibacterial protein.</title>
        <authorList>
            <person name="Lassegues M."/>
            <person name="Milochau A."/>
            <person name="Doignon F."/>
            <person name="Du Pasquier L."/>
            <person name="Valembois P."/>
        </authorList>
    </citation>
    <scope>NUCLEOTIDE SEQUENCE [GENOMIC DNA]</scope>
    <scope>FUNCTION</scope>
    <source>
        <tissue>Coelomic fluid</tissue>
        <tissue>Coelomocyte</tissue>
    </source>
</reference>
<reference key="2">
    <citation type="journal article" date="1997" name="Gene">
        <title>Molecular cloning of cDNA for lysenin, a novel protein in the earthworm Eisenia foetida that causes contraction of rat vascular smooth muscle.</title>
        <authorList>
            <person name="Sekizawa Y."/>
            <person name="Kubo T."/>
            <person name="Kobayashi H."/>
            <person name="Nakajima T."/>
            <person name="Natori S."/>
        </authorList>
    </citation>
    <scope>NUCLEOTIDE SEQUENCE [MRNA]</scope>
    <source>
        <tissue>Coelomocyte</tissue>
    </source>
</reference>
<reference key="3">
    <citation type="journal article" date="2004" name="Biochemistry">
        <title>Recognition of sphingomyelin by lysenin and lysenin-related proteins.</title>
        <authorList>
            <person name="Kiyokawa E."/>
            <person name="Makino A."/>
            <person name="Ishii K."/>
            <person name="Otsuka N."/>
            <person name="Yamaji-Hasegawa A."/>
            <person name="Kobayashi T."/>
        </authorList>
    </citation>
    <scope>FUNCTION</scope>
</reference>
<reference key="4">
    <citation type="journal article" date="2006" name="Dev. Comp. Immunol.">
        <title>Relationship between hemolytic molecules in Eisenia fetida earthworms.</title>
        <authorList>
            <person name="Prochazkova P."/>
            <person name="Silerova M."/>
            <person name="Felsberg J."/>
            <person name="Joskova R."/>
            <person name="Beschin A."/>
            <person name="De Baetselier P."/>
            <person name="Bilej M."/>
        </authorList>
    </citation>
    <scope>GENE EXPRESSION</scope>
</reference>
<comment type="function">
    <text evidence="1 4 5">Pore-forming toxin that specifically binds sphingomyelin in the plasma membrane of various cells (By similarity). Has hemolytic activity. It also has antibacterial activities against B.megaterium.</text>
</comment>
<comment type="subunit">
    <text evidence="2">Binds to sphingomyelin as a monomer by using its C-terminal domain. Forms a nonamer when sphingomyelin/LRP-2 ratio is lower than ca 500. Oligomerization, but not binding, is influenced by the fluidity of sphingomyelin.</text>
</comment>
<comment type="subcellular location">
    <subcellularLocation>
        <location evidence="2">Secreted</location>
    </subcellularLocation>
    <subcellularLocation>
        <location evidence="2">Target cell membrane</location>
    </subcellularLocation>
    <text evidence="2">Forms a beta-barrel pore in the membrane.</text>
</comment>
<comment type="tissue specificity">
    <text>Expressed by coelomocytes.</text>
</comment>
<comment type="similarity">
    <text evidence="6">Belongs to the lysenin family.</text>
</comment>
<sequence>MSSRAGIAEGYEQIEVDVVAVWKEGYVYENRGSTSVEQKIKITKGMRNLNSETKTLTASHSIGSTISTGDLFEIATVDVSYSYSHEESQVSMTETEVYESKEIEHTITIPPTSKFTRWQLNADVGGADIEYMYLIDEVTPIGGTLSIPQVIKSRAKILVGREIYLGETEIRIKHADRKEYMTVVSRKSWPAATLGHSKLYKFVLYEDMYGFRIKTLNTMYSGYEYAYSSDQGGIYFDQGSDNPKQRWAINKSLPLRHGDVVTFMNKYFTRSGLCYYDGPATDVYCLDKREDKWILEVVKP</sequence>
<protein>
    <recommendedName>
        <fullName>Lysenin-related protein 2</fullName>
        <shortName>LRP-2</shortName>
    </recommendedName>
    <alternativeName>
        <fullName>Fetidin</fullName>
    </alternativeName>
    <alternativeName>
        <fullName>Hemolysin</fullName>
    </alternativeName>
    <alternativeName>
        <fullName>Lysenin-3</fullName>
    </alternativeName>
    <alternativeName>
        <fullName>efL3</fullName>
    </alternativeName>
</protein>
<name>TXLR2_EISFE</name>